<gene>
    <name type="primary">Apoa1</name>
</gene>
<sequence>MKAVVLAVAVLFLTGSQARHFWQQDEPQSPWDRVKDFATVYVDAVKDSGREYVSQFETSALGKQLNLNLLENWDTFGSTFGRLQEQLGPVTREFWDSLEKDTDWLRQEMNKDLEEVKQKVQPYLDEFQKKWEEEVERYRPKVEPLGAQLREGARQKLEELQKQLVPLGEDLRDRARLHVDALRTKLAPYSDQMRDRLAERLTALRDNPKLAEYHARATEHLKKLGEKTKPTLEDLRQGLMPWLESLKAKALSVLDEATQKLNTQ</sequence>
<name>APOA1_NANGA</name>
<proteinExistence type="inferred from homology"/>
<organism>
    <name type="scientific">Nannospalax galili</name>
    <name type="common">Northern Israeli blind subterranean mole rat</name>
    <name type="synonym">Spalax galili</name>
    <dbReference type="NCBI Taxonomy" id="1026970"/>
    <lineage>
        <taxon>Eukaryota</taxon>
        <taxon>Metazoa</taxon>
        <taxon>Chordata</taxon>
        <taxon>Craniata</taxon>
        <taxon>Vertebrata</taxon>
        <taxon>Euteleostomi</taxon>
        <taxon>Mammalia</taxon>
        <taxon>Eutheria</taxon>
        <taxon>Euarchontoglires</taxon>
        <taxon>Glires</taxon>
        <taxon>Rodentia</taxon>
        <taxon>Myomorpha</taxon>
        <taxon>Muroidea</taxon>
        <taxon>Spalacidae</taxon>
        <taxon>Spalacinae</taxon>
        <taxon>Nannospalax</taxon>
    </lineage>
</organism>
<dbReference type="EMBL" id="AXCS01177051">
    <property type="status" value="NOT_ANNOTATED_CDS"/>
    <property type="molecule type" value="Genomic_DNA"/>
</dbReference>
<dbReference type="RefSeq" id="XP_008849164.1">
    <property type="nucleotide sequence ID" value="XM_008850942.3"/>
</dbReference>
<dbReference type="SMR" id="P0DTV1"/>
<dbReference type="Ensembl" id="ENSNGAT00000025518.1">
    <property type="protein sequence ID" value="ENSNGAP00000019853.1"/>
    <property type="gene ID" value="ENSNGAG00000019547.1"/>
</dbReference>
<dbReference type="GeneID" id="103748325"/>
<dbReference type="KEGG" id="ngi:103748325"/>
<dbReference type="CTD" id="335"/>
<dbReference type="GeneTree" id="ENSGT00950000182929"/>
<dbReference type="OMA" id="EYVAQFE"/>
<dbReference type="OrthoDB" id="8727817at2759"/>
<dbReference type="Proteomes" id="UP000694381">
    <property type="component" value="Unassembled WGS sequence"/>
</dbReference>
<dbReference type="GO" id="GO:0042627">
    <property type="term" value="C:chylomicron"/>
    <property type="evidence" value="ECO:0007669"/>
    <property type="project" value="TreeGrafter"/>
</dbReference>
<dbReference type="GO" id="GO:0030139">
    <property type="term" value="C:endocytic vesicle"/>
    <property type="evidence" value="ECO:0007669"/>
    <property type="project" value="Ensembl"/>
</dbReference>
<dbReference type="GO" id="GO:1903561">
    <property type="term" value="C:extracellular vesicle"/>
    <property type="evidence" value="ECO:0007669"/>
    <property type="project" value="TreeGrafter"/>
</dbReference>
<dbReference type="GO" id="GO:0034362">
    <property type="term" value="C:low-density lipoprotein particle"/>
    <property type="evidence" value="ECO:0007669"/>
    <property type="project" value="TreeGrafter"/>
</dbReference>
<dbReference type="GO" id="GO:0034366">
    <property type="term" value="C:spherical high-density lipoprotein particle"/>
    <property type="evidence" value="ECO:0007669"/>
    <property type="project" value="Ensembl"/>
</dbReference>
<dbReference type="GO" id="GO:0034361">
    <property type="term" value="C:very-low-density lipoprotein particle"/>
    <property type="evidence" value="ECO:0007669"/>
    <property type="project" value="Ensembl"/>
</dbReference>
<dbReference type="GO" id="GO:0001540">
    <property type="term" value="F:amyloid-beta binding"/>
    <property type="evidence" value="ECO:0007669"/>
    <property type="project" value="Ensembl"/>
</dbReference>
<dbReference type="GO" id="GO:0034191">
    <property type="term" value="F:apolipoprotein A-I receptor binding"/>
    <property type="evidence" value="ECO:0007669"/>
    <property type="project" value="Ensembl"/>
</dbReference>
<dbReference type="GO" id="GO:0045499">
    <property type="term" value="F:chemorepellent activity"/>
    <property type="evidence" value="ECO:0007669"/>
    <property type="project" value="Ensembl"/>
</dbReference>
<dbReference type="GO" id="GO:0015485">
    <property type="term" value="F:cholesterol binding"/>
    <property type="evidence" value="ECO:0007669"/>
    <property type="project" value="Ensembl"/>
</dbReference>
<dbReference type="GO" id="GO:0120020">
    <property type="term" value="F:cholesterol transfer activity"/>
    <property type="evidence" value="ECO:0007669"/>
    <property type="project" value="Ensembl"/>
</dbReference>
<dbReference type="GO" id="GO:0019899">
    <property type="term" value="F:enzyme binding"/>
    <property type="evidence" value="ECO:0007669"/>
    <property type="project" value="Ensembl"/>
</dbReference>
<dbReference type="GO" id="GO:0031072">
    <property type="term" value="F:heat shock protein binding"/>
    <property type="evidence" value="ECO:0007669"/>
    <property type="project" value="Ensembl"/>
</dbReference>
<dbReference type="GO" id="GO:0008035">
    <property type="term" value="F:high-density lipoprotein particle binding"/>
    <property type="evidence" value="ECO:0007669"/>
    <property type="project" value="Ensembl"/>
</dbReference>
<dbReference type="GO" id="GO:0070653">
    <property type="term" value="F:high-density lipoprotein particle receptor binding"/>
    <property type="evidence" value="ECO:0007669"/>
    <property type="project" value="Ensembl"/>
</dbReference>
<dbReference type="GO" id="GO:0060228">
    <property type="term" value="F:phosphatidylcholine-sterol O-acyltransferase activator activity"/>
    <property type="evidence" value="ECO:0007669"/>
    <property type="project" value="Ensembl"/>
</dbReference>
<dbReference type="GO" id="GO:0005543">
    <property type="term" value="F:phospholipid binding"/>
    <property type="evidence" value="ECO:0007669"/>
    <property type="project" value="Ensembl"/>
</dbReference>
<dbReference type="GO" id="GO:0042803">
    <property type="term" value="F:protein homodimerization activity"/>
    <property type="evidence" value="ECO:0000250"/>
    <property type="project" value="UniProtKB"/>
</dbReference>
<dbReference type="GO" id="GO:0030325">
    <property type="term" value="P:adrenal gland development"/>
    <property type="evidence" value="ECO:0007669"/>
    <property type="project" value="Ensembl"/>
</dbReference>
<dbReference type="GO" id="GO:0034205">
    <property type="term" value="P:amyloid-beta formation"/>
    <property type="evidence" value="ECO:0007669"/>
    <property type="project" value="Ensembl"/>
</dbReference>
<dbReference type="GO" id="GO:0043534">
    <property type="term" value="P:blood vessel endothelial cell migration"/>
    <property type="evidence" value="ECO:0007669"/>
    <property type="project" value="Ensembl"/>
</dbReference>
<dbReference type="GO" id="GO:0071402">
    <property type="term" value="P:cellular response to lipoprotein particle stimulus"/>
    <property type="evidence" value="ECO:0007669"/>
    <property type="project" value="Ensembl"/>
</dbReference>
<dbReference type="GO" id="GO:0006695">
    <property type="term" value="P:cholesterol biosynthetic process"/>
    <property type="evidence" value="ECO:0007669"/>
    <property type="project" value="Ensembl"/>
</dbReference>
<dbReference type="GO" id="GO:0033344">
    <property type="term" value="P:cholesterol efflux"/>
    <property type="evidence" value="ECO:0007669"/>
    <property type="project" value="Ensembl"/>
</dbReference>
<dbReference type="GO" id="GO:0042632">
    <property type="term" value="P:cholesterol homeostasis"/>
    <property type="evidence" value="ECO:0007669"/>
    <property type="project" value="Ensembl"/>
</dbReference>
<dbReference type="GO" id="GO:0070508">
    <property type="term" value="P:cholesterol import"/>
    <property type="evidence" value="ECO:0007669"/>
    <property type="project" value="Ensembl"/>
</dbReference>
<dbReference type="GO" id="GO:0001935">
    <property type="term" value="P:endothelial cell proliferation"/>
    <property type="evidence" value="ECO:0007669"/>
    <property type="project" value="Ensembl"/>
</dbReference>
<dbReference type="GO" id="GO:0007186">
    <property type="term" value="P:G protein-coupled receptor signaling pathway"/>
    <property type="evidence" value="ECO:0007669"/>
    <property type="project" value="Ensembl"/>
</dbReference>
<dbReference type="GO" id="GO:0008211">
    <property type="term" value="P:glucocorticoid metabolic process"/>
    <property type="evidence" value="ECO:0007669"/>
    <property type="project" value="Ensembl"/>
</dbReference>
<dbReference type="GO" id="GO:0034380">
    <property type="term" value="P:high-density lipoprotein particle assembly"/>
    <property type="evidence" value="ECO:0007669"/>
    <property type="project" value="Ensembl"/>
</dbReference>
<dbReference type="GO" id="GO:0034375">
    <property type="term" value="P:high-density lipoprotein particle remodeling"/>
    <property type="evidence" value="ECO:0007669"/>
    <property type="project" value="Ensembl"/>
</dbReference>
<dbReference type="GO" id="GO:0007229">
    <property type="term" value="P:integrin-mediated signaling pathway"/>
    <property type="evidence" value="ECO:0007669"/>
    <property type="project" value="Ensembl"/>
</dbReference>
<dbReference type="GO" id="GO:0019915">
    <property type="term" value="P:lipid storage"/>
    <property type="evidence" value="ECO:0007669"/>
    <property type="project" value="Ensembl"/>
</dbReference>
<dbReference type="GO" id="GO:0042158">
    <property type="term" value="P:lipoprotein biosynthetic process"/>
    <property type="evidence" value="ECO:0007669"/>
    <property type="project" value="Ensembl"/>
</dbReference>
<dbReference type="GO" id="GO:0060354">
    <property type="term" value="P:negative regulation of cell adhesion molecule production"/>
    <property type="evidence" value="ECO:0007669"/>
    <property type="project" value="Ensembl"/>
</dbReference>
<dbReference type="GO" id="GO:0002719">
    <property type="term" value="P:negative regulation of cytokine production involved in immune response"/>
    <property type="evidence" value="ECO:0007669"/>
    <property type="project" value="Ensembl"/>
</dbReference>
<dbReference type="GO" id="GO:0034115">
    <property type="term" value="P:negative regulation of heterotypic cell-cell adhesion"/>
    <property type="evidence" value="ECO:0007669"/>
    <property type="project" value="Ensembl"/>
</dbReference>
<dbReference type="GO" id="GO:0050728">
    <property type="term" value="P:negative regulation of inflammatory response"/>
    <property type="evidence" value="ECO:0007669"/>
    <property type="project" value="Ensembl"/>
</dbReference>
<dbReference type="GO" id="GO:0032691">
    <property type="term" value="P:negative regulation of interleukin-1 beta production"/>
    <property type="evidence" value="ECO:0007669"/>
    <property type="project" value="Ensembl"/>
</dbReference>
<dbReference type="GO" id="GO:0010804">
    <property type="term" value="P:negative regulation of tumor necrosis factor-mediated signaling pathway"/>
    <property type="evidence" value="ECO:0007669"/>
    <property type="project" value="Ensembl"/>
</dbReference>
<dbReference type="GO" id="GO:0010903">
    <property type="term" value="P:negative regulation of very-low-density lipoprotein particle remodeling"/>
    <property type="evidence" value="ECO:0007669"/>
    <property type="project" value="Ensembl"/>
</dbReference>
<dbReference type="GO" id="GO:0006656">
    <property type="term" value="P:phosphatidylcholine biosynthetic process"/>
    <property type="evidence" value="ECO:0007669"/>
    <property type="project" value="Ensembl"/>
</dbReference>
<dbReference type="GO" id="GO:0033700">
    <property type="term" value="P:phospholipid efflux"/>
    <property type="evidence" value="ECO:0007669"/>
    <property type="project" value="Ensembl"/>
</dbReference>
<dbReference type="GO" id="GO:0055091">
    <property type="term" value="P:phospholipid homeostasis"/>
    <property type="evidence" value="ECO:0007669"/>
    <property type="project" value="Ensembl"/>
</dbReference>
<dbReference type="GO" id="GO:0010875">
    <property type="term" value="P:positive regulation of cholesterol efflux"/>
    <property type="evidence" value="ECO:0007669"/>
    <property type="project" value="Ensembl"/>
</dbReference>
<dbReference type="GO" id="GO:0090205">
    <property type="term" value="P:positive regulation of cholesterol metabolic process"/>
    <property type="evidence" value="ECO:0007669"/>
    <property type="project" value="Ensembl"/>
</dbReference>
<dbReference type="GO" id="GO:0050766">
    <property type="term" value="P:positive regulation of phagocytosis"/>
    <property type="evidence" value="ECO:0007669"/>
    <property type="project" value="Ensembl"/>
</dbReference>
<dbReference type="GO" id="GO:1902995">
    <property type="term" value="P:positive regulation of phospholipid efflux"/>
    <property type="evidence" value="ECO:0007669"/>
    <property type="project" value="Ensembl"/>
</dbReference>
<dbReference type="GO" id="GO:0035025">
    <property type="term" value="P:positive regulation of Rho protein signal transduction"/>
    <property type="evidence" value="ECO:0007669"/>
    <property type="project" value="Ensembl"/>
</dbReference>
<dbReference type="GO" id="GO:0051496">
    <property type="term" value="P:positive regulation of stress fiber assembly"/>
    <property type="evidence" value="ECO:0007669"/>
    <property type="project" value="Ensembl"/>
</dbReference>
<dbReference type="GO" id="GO:1900026">
    <property type="term" value="P:positive regulation of substrate adhesion-dependent cell spreading"/>
    <property type="evidence" value="ECO:0007669"/>
    <property type="project" value="Ensembl"/>
</dbReference>
<dbReference type="GO" id="GO:0050821">
    <property type="term" value="P:protein stabilization"/>
    <property type="evidence" value="ECO:0007669"/>
    <property type="project" value="Ensembl"/>
</dbReference>
<dbReference type="GO" id="GO:0032489">
    <property type="term" value="P:regulation of Cdc42 protein signal transduction"/>
    <property type="evidence" value="ECO:0007669"/>
    <property type="project" value="Ensembl"/>
</dbReference>
<dbReference type="GO" id="GO:0030300">
    <property type="term" value="P:regulation of intestinal cholesterol absorption"/>
    <property type="evidence" value="ECO:0007669"/>
    <property type="project" value="Ensembl"/>
</dbReference>
<dbReference type="GO" id="GO:0043691">
    <property type="term" value="P:reverse cholesterol transport"/>
    <property type="evidence" value="ECO:0007669"/>
    <property type="project" value="Ensembl"/>
</dbReference>
<dbReference type="GO" id="GO:0070328">
    <property type="term" value="P:triglyceride homeostasis"/>
    <property type="evidence" value="ECO:0007669"/>
    <property type="project" value="Ensembl"/>
</dbReference>
<dbReference type="GO" id="GO:0051180">
    <property type="term" value="P:vitamin transport"/>
    <property type="evidence" value="ECO:0007669"/>
    <property type="project" value="Ensembl"/>
</dbReference>
<dbReference type="FunFam" id="1.20.120.20:FF:000001">
    <property type="entry name" value="Apolipoprotein A-I"/>
    <property type="match status" value="1"/>
</dbReference>
<dbReference type="FunFam" id="1.20.5.20:FF:000001">
    <property type="entry name" value="apolipoprotein A-I"/>
    <property type="match status" value="1"/>
</dbReference>
<dbReference type="Gene3D" id="1.20.5.20">
    <property type="match status" value="1"/>
</dbReference>
<dbReference type="Gene3D" id="6.10.140.380">
    <property type="match status" value="1"/>
</dbReference>
<dbReference type="Gene3D" id="1.20.120.20">
    <property type="entry name" value="Apolipoprotein"/>
    <property type="match status" value="1"/>
</dbReference>
<dbReference type="InterPro" id="IPR000074">
    <property type="entry name" value="ApoA_E"/>
</dbReference>
<dbReference type="InterPro" id="IPR050163">
    <property type="entry name" value="Apolipoprotein_A1/A4/E"/>
</dbReference>
<dbReference type="PANTHER" id="PTHR18976">
    <property type="entry name" value="APOLIPOPROTEIN"/>
    <property type="match status" value="1"/>
</dbReference>
<dbReference type="PANTHER" id="PTHR18976:SF11">
    <property type="entry name" value="APOLIPOPROTEIN A-I"/>
    <property type="match status" value="1"/>
</dbReference>
<dbReference type="Pfam" id="PF01442">
    <property type="entry name" value="Apolipoprotein"/>
    <property type="match status" value="1"/>
</dbReference>
<dbReference type="SUPFAM" id="SSF58113">
    <property type="entry name" value="Apolipoprotein A-I"/>
    <property type="match status" value="1"/>
</dbReference>
<keyword id="KW-0153">Cholesterol metabolism</keyword>
<keyword id="KW-0325">Glycoprotein</keyword>
<keyword id="KW-0345">HDL</keyword>
<keyword id="KW-0443">Lipid metabolism</keyword>
<keyword id="KW-0445">Lipid transport</keyword>
<keyword id="KW-0449">Lipoprotein</keyword>
<keyword id="KW-0558">Oxidation</keyword>
<keyword id="KW-0564">Palmitate</keyword>
<keyword id="KW-0597">Phosphoprotein</keyword>
<keyword id="KW-1185">Reference proteome</keyword>
<keyword id="KW-0677">Repeat</keyword>
<keyword id="KW-0964">Secreted</keyword>
<keyword id="KW-0732">Signal</keyword>
<keyword id="KW-0753">Steroid metabolism</keyword>
<keyword id="KW-1207">Sterol metabolism</keyword>
<keyword id="KW-0813">Transport</keyword>
<evidence type="ECO:0000250" key="1"/>
<evidence type="ECO:0000250" key="2">
    <source>
        <dbReference type="UniProtKB" id="G5BQH5"/>
    </source>
</evidence>
<evidence type="ECO:0000250" key="3">
    <source>
        <dbReference type="UniProtKB" id="P02647"/>
    </source>
</evidence>
<evidence type="ECO:0000250" key="4">
    <source>
        <dbReference type="UniProtKB" id="P02648"/>
    </source>
</evidence>
<evidence type="ECO:0000250" key="5">
    <source>
        <dbReference type="UniProtKB" id="P04639"/>
    </source>
</evidence>
<evidence type="ECO:0000255" key="6"/>
<evidence type="ECO:0000305" key="7"/>
<feature type="signal peptide" evidence="6">
    <location>
        <begin position="1"/>
        <end position="18"/>
    </location>
</feature>
<feature type="chain" id="PRO_0000450153" description="Proapolipoprotein A-I">
    <location>
        <begin position="19"/>
        <end position="264"/>
    </location>
</feature>
<feature type="chain" id="PRO_0000450154" description="Apolipoprotein A-I">
    <location>
        <begin position="25"/>
        <end position="264"/>
    </location>
</feature>
<feature type="chain" id="PRO_0000450155" description="Truncated apolipoprotein A-I" evidence="3">
    <location>
        <begin position="25"/>
        <end position="263"/>
    </location>
</feature>
<feature type="repeat" description="1">
    <location>
        <begin position="67"/>
        <end position="88"/>
    </location>
</feature>
<feature type="repeat" description="2">
    <location>
        <begin position="89"/>
        <end position="110"/>
    </location>
</feature>
<feature type="repeat" description="3; half-length">
    <location>
        <begin position="111"/>
        <end position="121"/>
    </location>
</feature>
<feature type="repeat" description="4">
    <location>
        <begin position="122"/>
        <end position="143"/>
    </location>
</feature>
<feature type="repeat" description="5">
    <location>
        <begin position="144"/>
        <end position="165"/>
    </location>
</feature>
<feature type="repeat" description="6">
    <location>
        <begin position="166"/>
        <end position="187"/>
    </location>
</feature>
<feature type="repeat" description="7; truncated">
    <location>
        <begin position="188"/>
        <end position="207"/>
    </location>
</feature>
<feature type="repeat" description="8">
    <location>
        <begin position="208"/>
        <end position="229"/>
    </location>
</feature>
<feature type="repeat" description="9; half-length">
    <location>
        <begin position="230"/>
        <end position="240"/>
    </location>
</feature>
<feature type="repeat" description="10">
    <location>
        <begin position="241"/>
        <end position="264"/>
    </location>
</feature>
<feature type="region of interest" description="10 X approximate tandem repeats">
    <location>
        <begin position="67"/>
        <end position="264"/>
    </location>
</feature>
<feature type="modified residue" description="Methionine sulfoxide" evidence="3">
    <location>
        <position position="109"/>
    </location>
</feature>
<feature type="modified residue" description="Methionine sulfoxide" evidence="3">
    <location>
        <position position="193"/>
    </location>
</feature>
<feature type="modified residue" description="Methionine sulfoxide" evidence="3">
    <location>
        <position position="240"/>
    </location>
</feature>
<accession>P0DTV1</accession>
<protein>
    <recommendedName>
        <fullName>Apolipoprotein A-I</fullName>
        <shortName>Apo-AI</shortName>
        <shortName>ApoA-I</shortName>
    </recommendedName>
    <alternativeName>
        <fullName>Apolipoprotein A1</fullName>
    </alternativeName>
    <component>
        <recommendedName>
            <fullName>Proapolipoprotein A-I</fullName>
            <shortName>ProapoA-I</shortName>
        </recommendedName>
    </component>
    <component>
        <recommendedName>
            <fullName>Truncated apolipoprotein A-I</fullName>
        </recommendedName>
    </component>
</protein>
<reference key="1">
    <citation type="journal article" date="2014" name="Nat. Commun.">
        <title>Genome-wide adaptive complexes to underground stresses in blind mole rats Spalax.</title>
        <authorList>
            <person name="Fang X."/>
            <person name="Nevo E."/>
            <person name="Han L."/>
            <person name="Levanon E.Y."/>
            <person name="Zhao J."/>
            <person name="Avivi A."/>
            <person name="Larkin D."/>
            <person name="Jiang X."/>
            <person name="Feranchuk S."/>
            <person name="Zhu Y."/>
            <person name="Fishman A."/>
            <person name="Feng Y."/>
            <person name="Sher N."/>
            <person name="Xiong Z."/>
            <person name="Hankeln T."/>
            <person name="Huang Z."/>
            <person name="Gorbunova V."/>
            <person name="Zhang L."/>
            <person name="Zhao W."/>
            <person name="Wildman D.E."/>
            <person name="Xiong Y."/>
            <person name="Gudkov A."/>
            <person name="Zheng Q."/>
            <person name="Rechavi G."/>
            <person name="Liu S."/>
            <person name="Bazak L."/>
            <person name="Chen J."/>
            <person name="Knisbacher B.A."/>
            <person name="Lu Y."/>
            <person name="Shams I."/>
            <person name="Gajda K."/>
            <person name="Farre M."/>
            <person name="Kim J."/>
            <person name="Lewin H.A."/>
            <person name="Ma J."/>
            <person name="Band M."/>
            <person name="Bicker A."/>
            <person name="Kranz A."/>
            <person name="Mattheus T."/>
            <person name="Schmidt H."/>
            <person name="Seluanov A."/>
            <person name="Azpurua J."/>
            <person name="McGowen M.R."/>
            <person name="Ben Jacob E."/>
            <person name="Li K."/>
            <person name="Peng S."/>
            <person name="Zhu X."/>
            <person name="Liao X."/>
            <person name="Li S."/>
            <person name="Krogh A."/>
            <person name="Zhou X."/>
            <person name="Brodsky L."/>
            <person name="Wang J."/>
        </authorList>
    </citation>
    <scope>NUCLEOTIDE SEQUENCE [LARGE SCALE GENOMIC DNA]</scope>
</reference>
<reference key="2">
    <citation type="unpublished observations" date="2020-03">
        <authorList>
            <person name="Puppione D.L."/>
        </authorList>
    </citation>
    <scope>IDENTIFICATION</scope>
</reference>
<comment type="function">
    <text evidence="3">Participates in the reverse transport of cholesterol from tissues to the liver for excretion by promoting cholesterol efflux from tissues and by acting as a cofactor for the lecithin cholesterol acyltransferase (LCAT). As part of the SPAP complex, activates spermatozoa motility.</text>
</comment>
<comment type="subunit">
    <text evidence="2 3 5">Homodimer (By similarity). Interacts with APOA1BP and CLU. Component of a sperm activating protein complex (SPAP), consisting of APOA1, an immunoglobulin heavy chain, an immunoglobulin light chain and albumin. Interacts with NDRG1. Interacts with SCGB3A2 (By similarity). Interacts with NAXE and YJEFN3 (By similarity).</text>
</comment>
<comment type="subcellular location">
    <subcellularLocation>
        <location evidence="3">Secreted</location>
    </subcellularLocation>
</comment>
<comment type="PTM">
    <text evidence="4">Glycosylated.</text>
</comment>
<comment type="PTM">
    <text evidence="4">Palmitoylated.</text>
</comment>
<comment type="PTM">
    <text evidence="1">Phosphorylation sites are present in the extracellular medium.</text>
</comment>
<comment type="similarity">
    <text evidence="7">Belongs to the apolipoprotein A1/A4/E family.</text>
</comment>